<organism>
    <name type="scientific">Human papillomavirus 57</name>
    <dbReference type="NCBI Taxonomy" id="333753"/>
    <lineage>
        <taxon>Viruses</taxon>
        <taxon>Monodnaviria</taxon>
        <taxon>Shotokuvirae</taxon>
        <taxon>Cossaviricota</taxon>
        <taxon>Papovaviricetes</taxon>
        <taxon>Zurhausenvirales</taxon>
        <taxon>Papillomaviridae</taxon>
        <taxon>Firstpapillomavirinae</taxon>
        <taxon>Alphapapillomavirus</taxon>
        <taxon>Alphapapillomavirus 4</taxon>
    </lineage>
</organism>
<sequence length="192" mass="21423">MAIRRWLLERQKSTQAATSDDDTLSPLRSAAAAVTATATATTAVPPTLQDSAQAPSSPPPKRQRVIVGQQWQQPDSTRKVREGQVECQNDRSIRNPDSTDPRRGHSDLDAVPVIHLQGEANCLKCFRYRVQKHKDVLFVKASSTWHWACGNGDKTAFVTLWYKSQEQRAEFLTRVHLPKGVKALPGYMSAFV</sequence>
<organismHost>
    <name type="scientific">Homo sapiens</name>
    <name type="common">Human</name>
    <dbReference type="NCBI Taxonomy" id="9606"/>
</organismHost>
<proteinExistence type="inferred from homology"/>
<evidence type="ECO:0000250" key="1">
    <source>
        <dbReference type="UniProtKB" id="P0DKA0"/>
    </source>
</evidence>
<evidence type="ECO:0000256" key="2">
    <source>
        <dbReference type="SAM" id="MobiDB-lite"/>
    </source>
</evidence>
<evidence type="ECO:0000305" key="3"/>
<accession>P0DKA8</accession>
<dbReference type="EMBL" id="X55965">
    <property type="status" value="NOT_ANNOTATED_CDS"/>
    <property type="molecule type" value="Genomic_DNA"/>
</dbReference>
<dbReference type="SMR" id="P0DKA8"/>
<dbReference type="Proteomes" id="UP000007667">
    <property type="component" value="Genome"/>
</dbReference>
<dbReference type="GO" id="GO:0042025">
    <property type="term" value="C:host cell nucleus"/>
    <property type="evidence" value="ECO:0007669"/>
    <property type="project" value="UniProtKB-SubCell"/>
</dbReference>
<dbReference type="GO" id="GO:0003677">
    <property type="term" value="F:DNA binding"/>
    <property type="evidence" value="ECO:0007669"/>
    <property type="project" value="InterPro"/>
</dbReference>
<dbReference type="GO" id="GO:0003700">
    <property type="term" value="F:DNA-binding transcription factor activity"/>
    <property type="evidence" value="ECO:0007669"/>
    <property type="project" value="InterPro"/>
</dbReference>
<dbReference type="GO" id="GO:0006275">
    <property type="term" value="P:regulation of DNA replication"/>
    <property type="evidence" value="ECO:0007669"/>
    <property type="project" value="InterPro"/>
</dbReference>
<dbReference type="Gene3D" id="3.30.70.330">
    <property type="match status" value="1"/>
</dbReference>
<dbReference type="InterPro" id="IPR035975">
    <property type="entry name" value="E2/EBNA1_C_sf"/>
</dbReference>
<dbReference type="InterPro" id="IPR012677">
    <property type="entry name" value="Nucleotide-bd_a/b_plait_sf"/>
</dbReference>
<dbReference type="InterPro" id="IPR000427">
    <property type="entry name" value="Papillomavirus_E2_C"/>
</dbReference>
<dbReference type="Pfam" id="PF00511">
    <property type="entry name" value="PPV_E2_C"/>
    <property type="match status" value="1"/>
</dbReference>
<dbReference type="SUPFAM" id="SSF54957">
    <property type="entry name" value="Viral DNA-binding domain"/>
    <property type="match status" value="1"/>
</dbReference>
<protein>
    <recommendedName>
        <fullName>Protein E8^E2C</fullName>
    </recommendedName>
</protein>
<keyword id="KW-1048">Host nucleus</keyword>
<reference key="1">
    <citation type="journal article" date="1990" name="Virus Res.">
        <title>A comparative sequence analysis of two human papillomavirus (HPV) types 2a and 57.</title>
        <authorList>
            <person name="Hirsch-Behnam A."/>
            <person name="Delius H."/>
            <person name="de Villiers E.M."/>
        </authorList>
    </citation>
    <scope>NUCLEOTIDE SEQUENCE [GENOMIC DNA]</scope>
</reference>
<name>VE8E2_HPV57</name>
<feature type="chain" id="PRO_0000438748" description="Protein E8^E2C">
    <location>
        <begin position="1"/>
        <end position="192"/>
    </location>
</feature>
<feature type="region of interest" description="Disordered" evidence="2">
    <location>
        <begin position="38"/>
        <end position="106"/>
    </location>
</feature>
<feature type="compositionally biased region" description="Low complexity" evidence="2">
    <location>
        <begin position="38"/>
        <end position="47"/>
    </location>
</feature>
<feature type="compositionally biased region" description="Basic and acidic residues" evidence="2">
    <location>
        <begin position="76"/>
        <end position="106"/>
    </location>
</feature>
<comment type="function">
    <text evidence="1">Plays a role in limiting the replication of viral DNA in keratinocytes. Recruits the host NCoR/SMRT complex to viral replication foci to mediate repression of both viral replication and transcription.</text>
</comment>
<comment type="subcellular location">
    <subcellularLocation>
        <location evidence="1">Host nucleus</location>
    </subcellularLocation>
</comment>
<comment type="similarity">
    <text evidence="3">Belongs to the papillomaviridae E8^E2C protein family.</text>
</comment>